<proteinExistence type="inferred from homology"/>
<accession>Q0VSA8</accession>
<feature type="chain" id="PRO_1000022162" description="Valine--tRNA ligase">
    <location>
        <begin position="1"/>
        <end position="931"/>
    </location>
</feature>
<feature type="coiled-coil region" evidence="1">
    <location>
        <begin position="859"/>
        <end position="931"/>
    </location>
</feature>
<feature type="short sequence motif" description="'HIGH' region">
    <location>
        <begin position="42"/>
        <end position="52"/>
    </location>
</feature>
<feature type="short sequence motif" description="'KMSKS' region">
    <location>
        <begin position="523"/>
        <end position="527"/>
    </location>
</feature>
<feature type="binding site" evidence="1">
    <location>
        <position position="526"/>
    </location>
    <ligand>
        <name>ATP</name>
        <dbReference type="ChEBI" id="CHEBI:30616"/>
    </ligand>
</feature>
<evidence type="ECO:0000255" key="1">
    <source>
        <dbReference type="HAMAP-Rule" id="MF_02004"/>
    </source>
</evidence>
<gene>
    <name evidence="1" type="primary">valS</name>
    <name type="ordered locus">ABO_0492</name>
</gene>
<name>SYV_ALCBS</name>
<sequence length="931" mass="105906">MIMDKTYQPDRIEQSWYENWEQAGHFKPSGQGDPFCIMIPPPNVTGSLHMGHAFQDTIMDTLVRYRRMQGRNTLWQVGTDHAGIATQMVVERKLAGEGTNRHELGREKFLDKVWEWKRESGGTITRQLRRMGASVDWTRERFTMDDGLSNAVREVFVRLHKEGLIYRGKRLVNWDPALHTAISDLEVENVEEQGHMWHFRYPLSDGSGHLVVATTRPETMLGDTAVAVHPQDPRYKDMIGKSIRLPLADRNIPIIADDYVDPDFGSGCVKITPAHDFNDYEVGKRHDLPMINILTIDAALNDEVPEGYRGLDRVEARKKVVDDLDALGLLEKVDDHTLQVPRGDRSGVVIEPYLTDQWFVAVEELAKPAIAAVENGDIQFVPKNYENMYFSWMRDLQDWCISRQLWWGHRIPAWYDADGNVYVGRDEEEVRAENNLGDTPLSQDDDVLDTWFSSALWTFSTLGWPDDTDALRTFHPTDVLVTGFDIIFFWVARMIMMTLKFTDQVPFKKVYVHGLVRDNDGQKMSKSKGNVLDPLDMIDGITLDALIDKRTKGLMQPQKEKQITKRTNKDFPDGINPYGTDALRFTFLSLASTGRDIKWDMGRIEGYRNFCNKIWNAARYVMMNTEGEDCGIDTDSEVELSLADRWIISALQRAELEVSEALDSFRFDVASHAAYEFIWNEYCDWYLELSKPVLWGDEYSDAQKRGTRRTLVTVLEAILRMAHPFMPFITEEIWQKVGPLAGKASAAGKGEKTDTIMLQPFPASEPAKIDTNAETGAEWVKAVISAVRNIRGEMGIPLGKALPIYLHNGKDSDKALLDANRVFLCKLAKLESITWLTAEDSAPASATALVGDMEILVPMAGLIDKEAEIERLSKEIEKLRKEVGRAEGKLKNPKFVDKAPQAVVDKEKAKLDDYRSQLAKLEEQLEKIKYL</sequence>
<comment type="function">
    <text evidence="1">Catalyzes the attachment of valine to tRNA(Val). As ValRS can inadvertently accommodate and process structurally similar amino acids such as threonine, to avoid such errors, it has a 'posttransfer' editing activity that hydrolyzes mischarged Thr-tRNA(Val) in a tRNA-dependent manner.</text>
</comment>
<comment type="catalytic activity">
    <reaction evidence="1">
        <text>tRNA(Val) + L-valine + ATP = L-valyl-tRNA(Val) + AMP + diphosphate</text>
        <dbReference type="Rhea" id="RHEA:10704"/>
        <dbReference type="Rhea" id="RHEA-COMP:9672"/>
        <dbReference type="Rhea" id="RHEA-COMP:9708"/>
        <dbReference type="ChEBI" id="CHEBI:30616"/>
        <dbReference type="ChEBI" id="CHEBI:33019"/>
        <dbReference type="ChEBI" id="CHEBI:57762"/>
        <dbReference type="ChEBI" id="CHEBI:78442"/>
        <dbReference type="ChEBI" id="CHEBI:78537"/>
        <dbReference type="ChEBI" id="CHEBI:456215"/>
        <dbReference type="EC" id="6.1.1.9"/>
    </reaction>
</comment>
<comment type="subunit">
    <text evidence="1">Monomer.</text>
</comment>
<comment type="subcellular location">
    <subcellularLocation>
        <location evidence="1">Cytoplasm</location>
    </subcellularLocation>
</comment>
<comment type="domain">
    <text evidence="1">ValRS has two distinct active sites: one for aminoacylation and one for editing. The misactivated threonine is translocated from the active site to the editing site.</text>
</comment>
<comment type="domain">
    <text evidence="1">The C-terminal coiled-coil domain is crucial for aminoacylation activity.</text>
</comment>
<comment type="similarity">
    <text evidence="1">Belongs to the class-I aminoacyl-tRNA synthetase family. ValS type 1 subfamily.</text>
</comment>
<keyword id="KW-0030">Aminoacyl-tRNA synthetase</keyword>
<keyword id="KW-0067">ATP-binding</keyword>
<keyword id="KW-0175">Coiled coil</keyword>
<keyword id="KW-0963">Cytoplasm</keyword>
<keyword id="KW-0436">Ligase</keyword>
<keyword id="KW-0547">Nucleotide-binding</keyword>
<keyword id="KW-0648">Protein biosynthesis</keyword>
<keyword id="KW-1185">Reference proteome</keyword>
<protein>
    <recommendedName>
        <fullName evidence="1">Valine--tRNA ligase</fullName>
        <ecNumber evidence="1">6.1.1.9</ecNumber>
    </recommendedName>
    <alternativeName>
        <fullName evidence="1">Valyl-tRNA synthetase</fullName>
        <shortName evidence="1">ValRS</shortName>
    </alternativeName>
</protein>
<organism>
    <name type="scientific">Alcanivorax borkumensis (strain ATCC 700651 / DSM 11573 / NCIMB 13689 / SK2)</name>
    <dbReference type="NCBI Taxonomy" id="393595"/>
    <lineage>
        <taxon>Bacteria</taxon>
        <taxon>Pseudomonadati</taxon>
        <taxon>Pseudomonadota</taxon>
        <taxon>Gammaproteobacteria</taxon>
        <taxon>Oceanospirillales</taxon>
        <taxon>Alcanivoracaceae</taxon>
        <taxon>Alcanivorax</taxon>
    </lineage>
</organism>
<reference key="1">
    <citation type="journal article" date="2006" name="Nat. Biotechnol.">
        <title>Genome sequence of the ubiquitous hydrocarbon-degrading marine bacterium Alcanivorax borkumensis.</title>
        <authorList>
            <person name="Schneiker S."/>
            <person name="Martins dos Santos V.A.P."/>
            <person name="Bartels D."/>
            <person name="Bekel T."/>
            <person name="Brecht M."/>
            <person name="Buhrmester J."/>
            <person name="Chernikova T.N."/>
            <person name="Denaro R."/>
            <person name="Ferrer M."/>
            <person name="Gertler C."/>
            <person name="Goesmann A."/>
            <person name="Golyshina O.V."/>
            <person name="Kaminski F."/>
            <person name="Khachane A.N."/>
            <person name="Lang S."/>
            <person name="Linke B."/>
            <person name="McHardy A.C."/>
            <person name="Meyer F."/>
            <person name="Nechitaylo T."/>
            <person name="Puehler A."/>
            <person name="Regenhardt D."/>
            <person name="Rupp O."/>
            <person name="Sabirova J.S."/>
            <person name="Selbitschka W."/>
            <person name="Yakimov M.M."/>
            <person name="Timmis K.N."/>
            <person name="Vorhoelter F.-J."/>
            <person name="Weidner S."/>
            <person name="Kaiser O."/>
            <person name="Golyshin P.N."/>
        </authorList>
    </citation>
    <scope>NUCLEOTIDE SEQUENCE [LARGE SCALE GENOMIC DNA]</scope>
    <source>
        <strain>ATCC 700651 / DSM 11573 / NCIMB 13689 / SK2</strain>
    </source>
</reference>
<dbReference type="EC" id="6.1.1.9" evidence="1"/>
<dbReference type="EMBL" id="AM286690">
    <property type="protein sequence ID" value="CAL15940.1"/>
    <property type="molecule type" value="Genomic_DNA"/>
</dbReference>
<dbReference type="SMR" id="Q0VSA8"/>
<dbReference type="STRING" id="393595.ABO_0492"/>
<dbReference type="KEGG" id="abo:ABO_0492"/>
<dbReference type="eggNOG" id="COG0525">
    <property type="taxonomic scope" value="Bacteria"/>
</dbReference>
<dbReference type="HOGENOM" id="CLU_001493_0_2_6"/>
<dbReference type="Proteomes" id="UP000008871">
    <property type="component" value="Chromosome"/>
</dbReference>
<dbReference type="GO" id="GO:0005829">
    <property type="term" value="C:cytosol"/>
    <property type="evidence" value="ECO:0007669"/>
    <property type="project" value="TreeGrafter"/>
</dbReference>
<dbReference type="GO" id="GO:0002161">
    <property type="term" value="F:aminoacyl-tRNA deacylase activity"/>
    <property type="evidence" value="ECO:0007669"/>
    <property type="project" value="InterPro"/>
</dbReference>
<dbReference type="GO" id="GO:0005524">
    <property type="term" value="F:ATP binding"/>
    <property type="evidence" value="ECO:0007669"/>
    <property type="project" value="UniProtKB-UniRule"/>
</dbReference>
<dbReference type="GO" id="GO:0004832">
    <property type="term" value="F:valine-tRNA ligase activity"/>
    <property type="evidence" value="ECO:0007669"/>
    <property type="project" value="UniProtKB-UniRule"/>
</dbReference>
<dbReference type="GO" id="GO:0006438">
    <property type="term" value="P:valyl-tRNA aminoacylation"/>
    <property type="evidence" value="ECO:0007669"/>
    <property type="project" value="UniProtKB-UniRule"/>
</dbReference>
<dbReference type="CDD" id="cd07962">
    <property type="entry name" value="Anticodon_Ia_Val"/>
    <property type="match status" value="1"/>
</dbReference>
<dbReference type="CDD" id="cd00817">
    <property type="entry name" value="ValRS_core"/>
    <property type="match status" value="1"/>
</dbReference>
<dbReference type="FunFam" id="1.10.287.380:FF:000001">
    <property type="entry name" value="Valine--tRNA ligase"/>
    <property type="match status" value="1"/>
</dbReference>
<dbReference type="FunFam" id="1.10.730.10:FF:000007">
    <property type="entry name" value="Valine--tRNA ligase"/>
    <property type="match status" value="1"/>
</dbReference>
<dbReference type="FunFam" id="3.40.50.620:FF:000032">
    <property type="entry name" value="Valine--tRNA ligase"/>
    <property type="match status" value="1"/>
</dbReference>
<dbReference type="FunFam" id="3.40.50.620:FF:000073">
    <property type="entry name" value="Valine--tRNA ligase"/>
    <property type="match status" value="1"/>
</dbReference>
<dbReference type="FunFam" id="3.90.740.10:FF:000005">
    <property type="entry name" value="Valine--tRNA ligase, mitochondrial"/>
    <property type="match status" value="1"/>
</dbReference>
<dbReference type="Gene3D" id="3.40.50.620">
    <property type="entry name" value="HUPs"/>
    <property type="match status" value="2"/>
</dbReference>
<dbReference type="Gene3D" id="1.10.730.10">
    <property type="entry name" value="Isoleucyl-tRNA Synthetase, Domain 1"/>
    <property type="match status" value="1"/>
</dbReference>
<dbReference type="Gene3D" id="1.10.287.380">
    <property type="entry name" value="Valyl-tRNA synthetase, C-terminal domain"/>
    <property type="match status" value="1"/>
</dbReference>
<dbReference type="Gene3D" id="3.90.740.10">
    <property type="entry name" value="Valyl/Leucyl/Isoleucyl-tRNA synthetase, editing domain"/>
    <property type="match status" value="1"/>
</dbReference>
<dbReference type="HAMAP" id="MF_02004">
    <property type="entry name" value="Val_tRNA_synth_type1"/>
    <property type="match status" value="1"/>
</dbReference>
<dbReference type="InterPro" id="IPR001412">
    <property type="entry name" value="aa-tRNA-synth_I_CS"/>
</dbReference>
<dbReference type="InterPro" id="IPR002300">
    <property type="entry name" value="aa-tRNA-synth_Ia"/>
</dbReference>
<dbReference type="InterPro" id="IPR033705">
    <property type="entry name" value="Anticodon_Ia_Val"/>
</dbReference>
<dbReference type="InterPro" id="IPR013155">
    <property type="entry name" value="M/V/L/I-tRNA-synth_anticd-bd"/>
</dbReference>
<dbReference type="InterPro" id="IPR014729">
    <property type="entry name" value="Rossmann-like_a/b/a_fold"/>
</dbReference>
<dbReference type="InterPro" id="IPR010978">
    <property type="entry name" value="tRNA-bd_arm"/>
</dbReference>
<dbReference type="InterPro" id="IPR009080">
    <property type="entry name" value="tRNAsynth_Ia_anticodon-bd"/>
</dbReference>
<dbReference type="InterPro" id="IPR037118">
    <property type="entry name" value="Val-tRNA_synth_C_sf"/>
</dbReference>
<dbReference type="InterPro" id="IPR019499">
    <property type="entry name" value="Val-tRNA_synth_tRNA-bd"/>
</dbReference>
<dbReference type="InterPro" id="IPR009008">
    <property type="entry name" value="Val/Leu/Ile-tRNA-synth_edit"/>
</dbReference>
<dbReference type="InterPro" id="IPR002303">
    <property type="entry name" value="Valyl-tRNA_ligase"/>
</dbReference>
<dbReference type="NCBIfam" id="NF004349">
    <property type="entry name" value="PRK05729.1"/>
    <property type="match status" value="1"/>
</dbReference>
<dbReference type="NCBIfam" id="TIGR00422">
    <property type="entry name" value="valS"/>
    <property type="match status" value="1"/>
</dbReference>
<dbReference type="PANTHER" id="PTHR11946:SF93">
    <property type="entry name" value="VALINE--TRNA LIGASE, CHLOROPLASTIC_MITOCHONDRIAL 2"/>
    <property type="match status" value="1"/>
</dbReference>
<dbReference type="PANTHER" id="PTHR11946">
    <property type="entry name" value="VALYL-TRNA SYNTHETASES"/>
    <property type="match status" value="1"/>
</dbReference>
<dbReference type="Pfam" id="PF08264">
    <property type="entry name" value="Anticodon_1"/>
    <property type="match status" value="1"/>
</dbReference>
<dbReference type="Pfam" id="PF00133">
    <property type="entry name" value="tRNA-synt_1"/>
    <property type="match status" value="1"/>
</dbReference>
<dbReference type="Pfam" id="PF10458">
    <property type="entry name" value="Val_tRNA-synt_C"/>
    <property type="match status" value="1"/>
</dbReference>
<dbReference type="PRINTS" id="PR00986">
    <property type="entry name" value="TRNASYNTHVAL"/>
</dbReference>
<dbReference type="SUPFAM" id="SSF47323">
    <property type="entry name" value="Anticodon-binding domain of a subclass of class I aminoacyl-tRNA synthetases"/>
    <property type="match status" value="1"/>
</dbReference>
<dbReference type="SUPFAM" id="SSF52374">
    <property type="entry name" value="Nucleotidylyl transferase"/>
    <property type="match status" value="1"/>
</dbReference>
<dbReference type="SUPFAM" id="SSF46589">
    <property type="entry name" value="tRNA-binding arm"/>
    <property type="match status" value="1"/>
</dbReference>
<dbReference type="SUPFAM" id="SSF50677">
    <property type="entry name" value="ValRS/IleRS/LeuRS editing domain"/>
    <property type="match status" value="1"/>
</dbReference>
<dbReference type="PROSITE" id="PS00178">
    <property type="entry name" value="AA_TRNA_LIGASE_I"/>
    <property type="match status" value="1"/>
</dbReference>